<keyword id="KW-0067">ATP-binding</keyword>
<keyword id="KW-0436">Ligase</keyword>
<keyword id="KW-0547">Nucleotide-binding</keyword>
<keyword id="KW-0648">Protein biosynthesis</keyword>
<keyword id="KW-1185">Reference proteome</keyword>
<proteinExistence type="inferred from homology"/>
<reference key="1">
    <citation type="journal article" date="2000" name="Nature">
        <title>The complete sequence of the mucosal pathogen Ureaplasma urealyticum.</title>
        <authorList>
            <person name="Glass J.I."/>
            <person name="Lefkowitz E.J."/>
            <person name="Glass J.S."/>
            <person name="Heiner C.R."/>
            <person name="Chen E.Y."/>
            <person name="Cassell G.H."/>
        </authorList>
    </citation>
    <scope>NUCLEOTIDE SEQUENCE [LARGE SCALE GENOMIC DNA]</scope>
    <source>
        <strain>ATCC 700970</strain>
    </source>
</reference>
<dbReference type="EC" id="6.3.5.-"/>
<dbReference type="EMBL" id="AF222894">
    <property type="protein sequence ID" value="AAF30957.1"/>
    <property type="molecule type" value="Genomic_DNA"/>
</dbReference>
<dbReference type="RefSeq" id="WP_010891814.1">
    <property type="nucleotide sequence ID" value="NC_002162.1"/>
</dbReference>
<dbReference type="SMR" id="Q9PPU6"/>
<dbReference type="STRING" id="273119.UU544"/>
<dbReference type="EnsemblBacteria" id="AAF30957">
    <property type="protein sequence ID" value="AAF30957"/>
    <property type="gene ID" value="UU544"/>
</dbReference>
<dbReference type="GeneID" id="29672464"/>
<dbReference type="KEGG" id="uur:UU544"/>
<dbReference type="PATRIC" id="fig|273119.6.peg.565"/>
<dbReference type="eggNOG" id="COG0064">
    <property type="taxonomic scope" value="Bacteria"/>
</dbReference>
<dbReference type="HOGENOM" id="CLU_019240_0_0_14"/>
<dbReference type="OrthoDB" id="9804078at2"/>
<dbReference type="Proteomes" id="UP000000423">
    <property type="component" value="Chromosome"/>
</dbReference>
<dbReference type="GO" id="GO:0050566">
    <property type="term" value="F:asparaginyl-tRNA synthase (glutamine-hydrolyzing) activity"/>
    <property type="evidence" value="ECO:0007669"/>
    <property type="project" value="RHEA"/>
</dbReference>
<dbReference type="GO" id="GO:0005524">
    <property type="term" value="F:ATP binding"/>
    <property type="evidence" value="ECO:0007669"/>
    <property type="project" value="UniProtKB-KW"/>
</dbReference>
<dbReference type="GO" id="GO:0050567">
    <property type="term" value="F:glutaminyl-tRNA synthase (glutamine-hydrolyzing) activity"/>
    <property type="evidence" value="ECO:0007669"/>
    <property type="project" value="UniProtKB-UniRule"/>
</dbReference>
<dbReference type="GO" id="GO:0070681">
    <property type="term" value="P:glutaminyl-tRNAGln biosynthesis via transamidation"/>
    <property type="evidence" value="ECO:0007669"/>
    <property type="project" value="TreeGrafter"/>
</dbReference>
<dbReference type="GO" id="GO:0006412">
    <property type="term" value="P:translation"/>
    <property type="evidence" value="ECO:0007669"/>
    <property type="project" value="UniProtKB-UniRule"/>
</dbReference>
<dbReference type="Gene3D" id="1.10.10.410">
    <property type="match status" value="1"/>
</dbReference>
<dbReference type="HAMAP" id="MF_00121">
    <property type="entry name" value="GatB"/>
    <property type="match status" value="1"/>
</dbReference>
<dbReference type="InterPro" id="IPR017959">
    <property type="entry name" value="Asn/Gln-tRNA_amidoTrfase_suB/E"/>
</dbReference>
<dbReference type="InterPro" id="IPR006075">
    <property type="entry name" value="Asn/Gln-tRNA_Trfase_suB/E_cat"/>
</dbReference>
<dbReference type="InterPro" id="IPR018027">
    <property type="entry name" value="Asn/Gln_amidotransferase"/>
</dbReference>
<dbReference type="InterPro" id="IPR003789">
    <property type="entry name" value="Asn/Gln_tRNA_amidoTrase-B-like"/>
</dbReference>
<dbReference type="InterPro" id="IPR004413">
    <property type="entry name" value="GatB"/>
</dbReference>
<dbReference type="InterPro" id="IPR023168">
    <property type="entry name" value="GatB_Yqey_C_2"/>
</dbReference>
<dbReference type="InterPro" id="IPR017958">
    <property type="entry name" value="Gln-tRNA_amidoTrfase_suB_CS"/>
</dbReference>
<dbReference type="InterPro" id="IPR014746">
    <property type="entry name" value="Gln_synth/guanido_kin_cat_dom"/>
</dbReference>
<dbReference type="NCBIfam" id="TIGR00133">
    <property type="entry name" value="gatB"/>
    <property type="match status" value="1"/>
</dbReference>
<dbReference type="NCBIfam" id="NF004012">
    <property type="entry name" value="PRK05477.1-2"/>
    <property type="match status" value="1"/>
</dbReference>
<dbReference type="NCBIfam" id="NF004014">
    <property type="entry name" value="PRK05477.1-4"/>
    <property type="match status" value="1"/>
</dbReference>
<dbReference type="PANTHER" id="PTHR11659">
    <property type="entry name" value="GLUTAMYL-TRNA GLN AMIDOTRANSFERASE SUBUNIT B MITOCHONDRIAL AND PROKARYOTIC PET112-RELATED"/>
    <property type="match status" value="1"/>
</dbReference>
<dbReference type="PANTHER" id="PTHR11659:SF0">
    <property type="entry name" value="GLUTAMYL-TRNA(GLN) AMIDOTRANSFERASE SUBUNIT B, MITOCHONDRIAL"/>
    <property type="match status" value="1"/>
</dbReference>
<dbReference type="Pfam" id="PF02934">
    <property type="entry name" value="GatB_N"/>
    <property type="match status" value="1"/>
</dbReference>
<dbReference type="Pfam" id="PF02637">
    <property type="entry name" value="GatB_Yqey"/>
    <property type="match status" value="1"/>
</dbReference>
<dbReference type="SMART" id="SM00845">
    <property type="entry name" value="GatB_Yqey"/>
    <property type="match status" value="1"/>
</dbReference>
<dbReference type="SUPFAM" id="SSF89095">
    <property type="entry name" value="GatB/YqeY motif"/>
    <property type="match status" value="1"/>
</dbReference>
<dbReference type="SUPFAM" id="SSF55931">
    <property type="entry name" value="Glutamine synthetase/guanido kinase"/>
    <property type="match status" value="1"/>
</dbReference>
<dbReference type="PROSITE" id="PS01234">
    <property type="entry name" value="GATB"/>
    <property type="match status" value="1"/>
</dbReference>
<organism>
    <name type="scientific">Ureaplasma parvum serovar 3 (strain ATCC 700970)</name>
    <dbReference type="NCBI Taxonomy" id="273119"/>
    <lineage>
        <taxon>Bacteria</taxon>
        <taxon>Bacillati</taxon>
        <taxon>Mycoplasmatota</taxon>
        <taxon>Mycoplasmoidales</taxon>
        <taxon>Mycoplasmoidaceae</taxon>
        <taxon>Ureaplasma</taxon>
    </lineage>
</organism>
<accession>Q9PPU6</accession>
<protein>
    <recommendedName>
        <fullName>Aspartyl/glutamyl-tRNA(Asn/Gln) amidotransferase subunit B</fullName>
        <shortName>Asp/Glu-ADT subunit B</shortName>
        <ecNumber>6.3.5.-</ecNumber>
    </recommendedName>
</protein>
<feature type="chain" id="PRO_0000148864" description="Aspartyl/glutamyl-tRNA(Asn/Gln) amidotransferase subunit B">
    <location>
        <begin position="1"/>
        <end position="477"/>
    </location>
</feature>
<evidence type="ECO:0000250" key="1"/>
<evidence type="ECO:0000305" key="2"/>
<sequence length="477" mass="55279">MQNFEVIIGIEVHTALNTKTKMFSNAATSHKSIPNTLINEIDLALPGTLPTVNQEVVHKGLFLANALHMRTNHQFIAFDRKHYYYLDLPKGYQITQNYFPIGQNGYIQIIDEYNNLKRIRIKQIHLEEDTAKQTNIGNQIYLDYNRAGWPLIEIVSEADLRSAQETVLFLEELRKILLFNDISDAKMEDGSLRVDVNVSIRPQGAKKFGTKVEIKNINSISNVAKAIDYEIRRQLNLILLNQNVEQQTRRFDDNTNTTVFMRSKNDAINYRYIREANIAPIHLSDDYVKKMFLTKSCSINDLRQQLAQKGLVSSAIEQLLSDGPLFKAFKYVDKIVNNPLSVYKWLCLEFIGLINKNTQNIEEITPELLQKIARMILLFDQTLINGKQTKIILEKIYLTNKDPQILIKELGFEQITNENEITKLWHQILAKNQEMLLQYNERPDRVEKFFMGEIMKLTKAQANPTISFNVLKKILQK</sequence>
<comment type="function">
    <text evidence="1">Allows the formation of correctly charged Asn-tRNA(Asn) or Gln-tRNA(Gln) through the transamidation of misacylated Asp-tRNA(Asn) or Glu-tRNA(Gln) in organisms which lack either or both of asparaginyl-tRNA or glutaminyl-tRNA synthetases. The reaction takes place in the presence of glutamine and ATP through an activated phospho-Asp-tRNA(Asn) or phospho-Glu-tRNA(Gln) (By similarity).</text>
</comment>
<comment type="catalytic activity">
    <reaction>
        <text>L-glutamyl-tRNA(Gln) + L-glutamine + ATP + H2O = L-glutaminyl-tRNA(Gln) + L-glutamate + ADP + phosphate + H(+)</text>
        <dbReference type="Rhea" id="RHEA:17521"/>
        <dbReference type="Rhea" id="RHEA-COMP:9681"/>
        <dbReference type="Rhea" id="RHEA-COMP:9684"/>
        <dbReference type="ChEBI" id="CHEBI:15377"/>
        <dbReference type="ChEBI" id="CHEBI:15378"/>
        <dbReference type="ChEBI" id="CHEBI:29985"/>
        <dbReference type="ChEBI" id="CHEBI:30616"/>
        <dbReference type="ChEBI" id="CHEBI:43474"/>
        <dbReference type="ChEBI" id="CHEBI:58359"/>
        <dbReference type="ChEBI" id="CHEBI:78520"/>
        <dbReference type="ChEBI" id="CHEBI:78521"/>
        <dbReference type="ChEBI" id="CHEBI:456216"/>
    </reaction>
</comment>
<comment type="catalytic activity">
    <reaction>
        <text>L-aspartyl-tRNA(Asn) + L-glutamine + ATP + H2O = L-asparaginyl-tRNA(Asn) + L-glutamate + ADP + phosphate + 2 H(+)</text>
        <dbReference type="Rhea" id="RHEA:14513"/>
        <dbReference type="Rhea" id="RHEA-COMP:9674"/>
        <dbReference type="Rhea" id="RHEA-COMP:9677"/>
        <dbReference type="ChEBI" id="CHEBI:15377"/>
        <dbReference type="ChEBI" id="CHEBI:15378"/>
        <dbReference type="ChEBI" id="CHEBI:29985"/>
        <dbReference type="ChEBI" id="CHEBI:30616"/>
        <dbReference type="ChEBI" id="CHEBI:43474"/>
        <dbReference type="ChEBI" id="CHEBI:58359"/>
        <dbReference type="ChEBI" id="CHEBI:78515"/>
        <dbReference type="ChEBI" id="CHEBI:78516"/>
        <dbReference type="ChEBI" id="CHEBI:456216"/>
    </reaction>
</comment>
<comment type="subunit">
    <text evidence="1">Heterotrimer of A, B and C subunits.</text>
</comment>
<comment type="similarity">
    <text evidence="2">Belongs to the GatB/GatE family. GatB subfamily.</text>
</comment>
<name>GATB_UREPA</name>
<gene>
    <name type="primary">gatB</name>
    <name type="ordered locus">UU544</name>
</gene>